<gene>
    <name evidence="1" type="primary">glyA2</name>
    <name type="ordered locus">RPA2796</name>
</gene>
<accession>Q6N622</accession>
<dbReference type="EC" id="2.1.2.1" evidence="1"/>
<dbReference type="EMBL" id="BX572602">
    <property type="protein sequence ID" value="CAE28238.1"/>
    <property type="molecule type" value="Genomic_DNA"/>
</dbReference>
<dbReference type="RefSeq" id="WP_011158347.1">
    <property type="nucleotide sequence ID" value="NZ_CP116810.1"/>
</dbReference>
<dbReference type="SMR" id="Q6N622"/>
<dbReference type="STRING" id="258594.RPA2796"/>
<dbReference type="GeneID" id="66893873"/>
<dbReference type="eggNOG" id="COG0112">
    <property type="taxonomic scope" value="Bacteria"/>
</dbReference>
<dbReference type="HOGENOM" id="CLU_022477_2_1_5"/>
<dbReference type="PhylomeDB" id="Q6N622"/>
<dbReference type="UniPathway" id="UPA00193"/>
<dbReference type="UniPathway" id="UPA00288">
    <property type="reaction ID" value="UER01023"/>
</dbReference>
<dbReference type="GO" id="GO:0005829">
    <property type="term" value="C:cytosol"/>
    <property type="evidence" value="ECO:0007669"/>
    <property type="project" value="TreeGrafter"/>
</dbReference>
<dbReference type="GO" id="GO:0004372">
    <property type="term" value="F:glycine hydroxymethyltransferase activity"/>
    <property type="evidence" value="ECO:0007669"/>
    <property type="project" value="UniProtKB-UniRule"/>
</dbReference>
<dbReference type="GO" id="GO:0030170">
    <property type="term" value="F:pyridoxal phosphate binding"/>
    <property type="evidence" value="ECO:0007669"/>
    <property type="project" value="UniProtKB-UniRule"/>
</dbReference>
<dbReference type="GO" id="GO:0019264">
    <property type="term" value="P:glycine biosynthetic process from serine"/>
    <property type="evidence" value="ECO:0007669"/>
    <property type="project" value="UniProtKB-UniRule"/>
</dbReference>
<dbReference type="GO" id="GO:0035999">
    <property type="term" value="P:tetrahydrofolate interconversion"/>
    <property type="evidence" value="ECO:0007669"/>
    <property type="project" value="UniProtKB-UniRule"/>
</dbReference>
<dbReference type="CDD" id="cd00378">
    <property type="entry name" value="SHMT"/>
    <property type="match status" value="1"/>
</dbReference>
<dbReference type="FunFam" id="3.40.640.10:FF:000001">
    <property type="entry name" value="Serine hydroxymethyltransferase"/>
    <property type="match status" value="1"/>
</dbReference>
<dbReference type="Gene3D" id="3.90.1150.10">
    <property type="entry name" value="Aspartate Aminotransferase, domain 1"/>
    <property type="match status" value="1"/>
</dbReference>
<dbReference type="Gene3D" id="3.40.640.10">
    <property type="entry name" value="Type I PLP-dependent aspartate aminotransferase-like (Major domain)"/>
    <property type="match status" value="1"/>
</dbReference>
<dbReference type="HAMAP" id="MF_00051">
    <property type="entry name" value="SHMT"/>
    <property type="match status" value="1"/>
</dbReference>
<dbReference type="InterPro" id="IPR015424">
    <property type="entry name" value="PyrdxlP-dep_Trfase"/>
</dbReference>
<dbReference type="InterPro" id="IPR015421">
    <property type="entry name" value="PyrdxlP-dep_Trfase_major"/>
</dbReference>
<dbReference type="InterPro" id="IPR015422">
    <property type="entry name" value="PyrdxlP-dep_Trfase_small"/>
</dbReference>
<dbReference type="InterPro" id="IPR001085">
    <property type="entry name" value="Ser_HO-MeTrfase"/>
</dbReference>
<dbReference type="InterPro" id="IPR049943">
    <property type="entry name" value="Ser_HO-MeTrfase-like"/>
</dbReference>
<dbReference type="InterPro" id="IPR019798">
    <property type="entry name" value="Ser_HO-MeTrfase_PLP_BS"/>
</dbReference>
<dbReference type="InterPro" id="IPR039429">
    <property type="entry name" value="SHMT-like_dom"/>
</dbReference>
<dbReference type="NCBIfam" id="NF000586">
    <property type="entry name" value="PRK00011.1"/>
    <property type="match status" value="1"/>
</dbReference>
<dbReference type="PANTHER" id="PTHR11680">
    <property type="entry name" value="SERINE HYDROXYMETHYLTRANSFERASE"/>
    <property type="match status" value="1"/>
</dbReference>
<dbReference type="PANTHER" id="PTHR11680:SF35">
    <property type="entry name" value="SERINE HYDROXYMETHYLTRANSFERASE 1"/>
    <property type="match status" value="1"/>
</dbReference>
<dbReference type="Pfam" id="PF00464">
    <property type="entry name" value="SHMT"/>
    <property type="match status" value="1"/>
</dbReference>
<dbReference type="PIRSF" id="PIRSF000412">
    <property type="entry name" value="SHMT"/>
    <property type="match status" value="1"/>
</dbReference>
<dbReference type="SUPFAM" id="SSF53383">
    <property type="entry name" value="PLP-dependent transferases"/>
    <property type="match status" value="1"/>
</dbReference>
<dbReference type="PROSITE" id="PS00096">
    <property type="entry name" value="SHMT"/>
    <property type="match status" value="1"/>
</dbReference>
<feature type="chain" id="PRO_0000113652" description="Serine hydroxymethyltransferase 2">
    <location>
        <begin position="1"/>
        <end position="434"/>
    </location>
</feature>
<feature type="binding site" evidence="1">
    <location>
        <position position="136"/>
    </location>
    <ligand>
        <name>(6S)-5,6,7,8-tetrahydrofolate</name>
        <dbReference type="ChEBI" id="CHEBI:57453"/>
    </ligand>
</feature>
<feature type="binding site" evidence="1">
    <location>
        <begin position="140"/>
        <end position="142"/>
    </location>
    <ligand>
        <name>(6S)-5,6,7,8-tetrahydrofolate</name>
        <dbReference type="ChEBI" id="CHEBI:57453"/>
    </ligand>
</feature>
<feature type="site" description="Plays an important role in substrate specificity" evidence="1">
    <location>
        <position position="244"/>
    </location>
</feature>
<feature type="modified residue" description="N6-(pyridoxal phosphate)lysine" evidence="1">
    <location>
        <position position="245"/>
    </location>
</feature>
<protein>
    <recommendedName>
        <fullName evidence="1">Serine hydroxymethyltransferase 2</fullName>
        <shortName evidence="1">SHMT 2</shortName>
        <shortName evidence="1">Serine methylase 2</shortName>
        <ecNumber evidence="1">2.1.2.1</ecNumber>
    </recommendedName>
</protein>
<keyword id="KW-0028">Amino-acid biosynthesis</keyword>
<keyword id="KW-0963">Cytoplasm</keyword>
<keyword id="KW-0554">One-carbon metabolism</keyword>
<keyword id="KW-0663">Pyridoxal phosphate</keyword>
<keyword id="KW-0808">Transferase</keyword>
<name>GLYA2_RHOPA</name>
<comment type="function">
    <text evidence="1">Catalyzes the reversible interconversion of serine and glycine with tetrahydrofolate (THF) serving as the one-carbon carrier. This reaction serves as the major source of one-carbon groups required for the biosynthesis of purines, thymidylate, methionine, and other important biomolecules. Also exhibits THF-independent aldolase activity toward beta-hydroxyamino acids, producing glycine and aldehydes, via a retro-aldol mechanism.</text>
</comment>
<comment type="catalytic activity">
    <reaction evidence="1">
        <text>(6R)-5,10-methylene-5,6,7,8-tetrahydrofolate + glycine + H2O = (6S)-5,6,7,8-tetrahydrofolate + L-serine</text>
        <dbReference type="Rhea" id="RHEA:15481"/>
        <dbReference type="ChEBI" id="CHEBI:15377"/>
        <dbReference type="ChEBI" id="CHEBI:15636"/>
        <dbReference type="ChEBI" id="CHEBI:33384"/>
        <dbReference type="ChEBI" id="CHEBI:57305"/>
        <dbReference type="ChEBI" id="CHEBI:57453"/>
        <dbReference type="EC" id="2.1.2.1"/>
    </reaction>
</comment>
<comment type="cofactor">
    <cofactor evidence="1">
        <name>pyridoxal 5'-phosphate</name>
        <dbReference type="ChEBI" id="CHEBI:597326"/>
    </cofactor>
</comment>
<comment type="pathway">
    <text evidence="1">One-carbon metabolism; tetrahydrofolate interconversion.</text>
</comment>
<comment type="pathway">
    <text evidence="1">Amino-acid biosynthesis; glycine biosynthesis; glycine from L-serine: step 1/1.</text>
</comment>
<comment type="subunit">
    <text evidence="1">Homodimer.</text>
</comment>
<comment type="subcellular location">
    <subcellularLocation>
        <location evidence="1">Cytoplasm</location>
    </subcellularLocation>
</comment>
<comment type="similarity">
    <text evidence="1">Belongs to the SHMT family.</text>
</comment>
<organism>
    <name type="scientific">Rhodopseudomonas palustris (strain ATCC BAA-98 / CGA009)</name>
    <dbReference type="NCBI Taxonomy" id="258594"/>
    <lineage>
        <taxon>Bacteria</taxon>
        <taxon>Pseudomonadati</taxon>
        <taxon>Pseudomonadota</taxon>
        <taxon>Alphaproteobacteria</taxon>
        <taxon>Hyphomicrobiales</taxon>
        <taxon>Nitrobacteraceae</taxon>
        <taxon>Rhodopseudomonas</taxon>
    </lineage>
</organism>
<proteinExistence type="inferred from homology"/>
<sequence length="434" mass="45360">MGPSVAPHAVHTIANPGVSAAGLVAADHAVAAAIADEETRQRDSIELIASENFVSRAVLDAQGSVLTNKYAEGYPHRRYYGGCANVDAIEDLVIARVNQLFGSAYANVQPHSGSQANQAVFLALLAPGDTILGLDLKAGGHLTHGAPVNMSGRWFKAVSYGVDPETHRIDMDQVAVQARQHRPRLLIAGGSAYPRIIDFGRFRQIADEVGAILMVDMAHFAGLVAGGVYPSPVPFADVVTSTTHKTLRGPRGGFVLTNDANIAKKINSATFPGLQGGPLMHVIAAKAVAFGEALQPEFGAYAQAVVENCRVLAQALADGGLTITSGGTDCHLAVVDLRPFGVTGNIAEQALESVGITLNKNAIPNDPEKPMVTSGIRVGTAAGTSRGFGADQYREIAGLVLETLHAVRAGTLDAAGQEINKSVRRLAASFPLPY</sequence>
<evidence type="ECO:0000255" key="1">
    <source>
        <dbReference type="HAMAP-Rule" id="MF_00051"/>
    </source>
</evidence>
<reference key="1">
    <citation type="journal article" date="2004" name="Nat. Biotechnol.">
        <title>Complete genome sequence of the metabolically versatile photosynthetic bacterium Rhodopseudomonas palustris.</title>
        <authorList>
            <person name="Larimer F.W."/>
            <person name="Chain P."/>
            <person name="Hauser L."/>
            <person name="Lamerdin J.E."/>
            <person name="Malfatti S."/>
            <person name="Do L."/>
            <person name="Land M.L."/>
            <person name="Pelletier D.A."/>
            <person name="Beatty J.T."/>
            <person name="Lang A.S."/>
            <person name="Tabita F.R."/>
            <person name="Gibson J.L."/>
            <person name="Hanson T.E."/>
            <person name="Bobst C."/>
            <person name="Torres y Torres J.L."/>
            <person name="Peres C."/>
            <person name="Harrison F.H."/>
            <person name="Gibson J."/>
            <person name="Harwood C.S."/>
        </authorList>
    </citation>
    <scope>NUCLEOTIDE SEQUENCE [LARGE SCALE GENOMIC DNA]</scope>
    <source>
        <strain>ATCC BAA-98 / CGA009</strain>
    </source>
</reference>